<organism>
    <name type="scientific">Xenopus laevis</name>
    <name type="common">African clawed frog</name>
    <dbReference type="NCBI Taxonomy" id="8355"/>
    <lineage>
        <taxon>Eukaryota</taxon>
        <taxon>Metazoa</taxon>
        <taxon>Chordata</taxon>
        <taxon>Craniata</taxon>
        <taxon>Vertebrata</taxon>
        <taxon>Euteleostomi</taxon>
        <taxon>Amphibia</taxon>
        <taxon>Batrachia</taxon>
        <taxon>Anura</taxon>
        <taxon>Pipoidea</taxon>
        <taxon>Pipidae</taxon>
        <taxon>Xenopodinae</taxon>
        <taxon>Xenopus</taxon>
        <taxon>Xenopus</taxon>
    </lineage>
</organism>
<reference evidence="5 7" key="1">
    <citation type="journal article" date="2010" name="Mech. Dev.">
        <title>XPteg (Xenopus proximal tubules-expressed gene) is essential for pronephric mesoderm specification and tubulogenesis.</title>
        <authorList>
            <person name="Lee S.J."/>
            <person name="Kim S."/>
            <person name="Choi S.C."/>
            <person name="Han J.K."/>
        </authorList>
    </citation>
    <scope>NUCLEOTIDE SEQUENCE [MRNA]</scope>
    <scope>FUNCTION</scope>
    <scope>TISSUE SPECIFICITY</scope>
    <scope>DEVELOPMENTAL STAGE</scope>
    <scope>INDUCTION</scope>
    <source>
        <tissue evidence="3">Tadpole</tissue>
    </source>
</reference>
<reference evidence="6" key="2">
    <citation type="submission" date="2008-11" db="EMBL/GenBank/DDBJ databases">
        <authorList>
            <consortium name="NIH - Xenopus Gene Collection (XGC) project"/>
        </authorList>
    </citation>
    <scope>NUCLEOTIDE SEQUENCE [LARGE SCALE MRNA]</scope>
</reference>
<comment type="function">
    <text evidence="3">Essential for pronephric tubule development, acting upstream of pax8 and lhx1/lim1 and downstream of retinoic acid signaling to induce pronephric mesoderm to form pronephric tubule-specific cells.</text>
</comment>
<comment type="subcellular location">
    <subcellularLocation>
        <location evidence="2">Membrane</location>
        <topology evidence="2">Single-pass membrane protein</topology>
    </subcellularLocation>
</comment>
<comment type="tissue specificity">
    <text evidence="3">Expressed in prospective pronephric mesoderm at the late gastrula stage. After neurulation, expressed in the intermediate mesoderm, eye placode and blood islands. Expression becomes restricted to the pronephric proximal tubule during embryogenesis, but is absent from the connecting tubules.</text>
</comment>
<comment type="developmental stage">
    <text evidence="3">Expressed zygotically from late gastrula stages, persisting throughout embryogenesis with highest expression between stages 30 and 35.</text>
</comment>
<comment type="induction">
    <text evidence="3">By retinoic acid.</text>
</comment>
<comment type="similarity">
    <text evidence="5">Belongs to the PDZK1-interacting protein 1/SMIM24 family.</text>
</comment>
<accession>Q6XQ84</accession>
<evidence type="ECO:0000250" key="1">
    <source>
        <dbReference type="UniProtKB" id="Q13113"/>
    </source>
</evidence>
<evidence type="ECO:0000255" key="2"/>
<evidence type="ECO:0000269" key="3">
    <source>
    </source>
</evidence>
<evidence type="ECO:0000303" key="4">
    <source>
    </source>
</evidence>
<evidence type="ECO:0000305" key="5"/>
<evidence type="ECO:0000312" key="6">
    <source>
        <dbReference type="EMBL" id="AAI69478.1"/>
    </source>
</evidence>
<evidence type="ECO:0000312" key="7">
    <source>
        <dbReference type="EMBL" id="AAP51037.1"/>
    </source>
</evidence>
<protein>
    <recommendedName>
        <fullName evidence="4">Proximal tubules-expressed gene protein</fullName>
        <shortName evidence="4">Xpteg</shortName>
    </recommendedName>
    <alternativeName>
        <fullName evidence="4">MAP17-like protein</fullName>
    </alternativeName>
    <alternativeName>
        <fullName evidence="1">PDZK1-interacting protein 1-like</fullName>
    </alternativeName>
</protein>
<feature type="chain" id="PRO_0000391693" description="Proximal tubules-expressed gene protein">
    <location>
        <begin position="1"/>
        <end position="122"/>
    </location>
</feature>
<feature type="transmembrane region" description="Helical" evidence="2">
    <location>
        <begin position="33"/>
        <end position="53"/>
    </location>
</feature>
<dbReference type="EMBL" id="AY216664">
    <property type="protein sequence ID" value="AAP51037.1"/>
    <property type="molecule type" value="mRNA"/>
</dbReference>
<dbReference type="EMBL" id="AY216665">
    <property type="protein sequence ID" value="AAP51038.1"/>
    <property type="molecule type" value="mRNA"/>
</dbReference>
<dbReference type="EMBL" id="BC169478">
    <property type="protein sequence ID" value="AAI69478.1"/>
    <property type="molecule type" value="mRNA"/>
</dbReference>
<dbReference type="EMBL" id="BC169480">
    <property type="protein sequence ID" value="AAI69480.1"/>
    <property type="molecule type" value="mRNA"/>
</dbReference>
<dbReference type="RefSeq" id="NP_001091905.1">
    <property type="nucleotide sequence ID" value="NM_001098435.1"/>
</dbReference>
<dbReference type="SMR" id="Q6XQ84"/>
<dbReference type="GeneID" id="445820"/>
<dbReference type="KEGG" id="xla:445820"/>
<dbReference type="AGR" id="Xenbase:XB-GENE-5829591"/>
<dbReference type="CTD" id="445820"/>
<dbReference type="Xenbase" id="XB-GENE-5829591">
    <property type="gene designation" value="pdzk1ip1.S"/>
</dbReference>
<dbReference type="OMA" id="SECCEAR"/>
<dbReference type="OrthoDB" id="9900654at2759"/>
<dbReference type="Proteomes" id="UP000186698">
    <property type="component" value="Chromosome 4S"/>
</dbReference>
<dbReference type="Bgee" id="445820">
    <property type="expression patterns" value="Expressed in kidney and 13 other cell types or tissues"/>
</dbReference>
<dbReference type="GO" id="GO:0016020">
    <property type="term" value="C:membrane"/>
    <property type="evidence" value="ECO:0007669"/>
    <property type="project" value="UniProtKB-SubCell"/>
</dbReference>
<dbReference type="GO" id="GO:0039020">
    <property type="term" value="P:pronephric nephron tubule development"/>
    <property type="evidence" value="ECO:0000315"/>
    <property type="project" value="UniProtKB"/>
</dbReference>
<dbReference type="GO" id="GO:0048793">
    <property type="term" value="P:pronephros development"/>
    <property type="evidence" value="ECO:0000315"/>
    <property type="project" value="UniProtKB"/>
</dbReference>
<dbReference type="GO" id="GO:0072116">
    <property type="term" value="P:pronephros formation"/>
    <property type="evidence" value="ECO:0000315"/>
    <property type="project" value="UniProtKB"/>
</dbReference>
<dbReference type="GO" id="GO:0048384">
    <property type="term" value="P:retinoic acid receptor signaling pathway"/>
    <property type="evidence" value="ECO:0000315"/>
    <property type="project" value="UniProtKB"/>
</dbReference>
<dbReference type="InterPro" id="IPR031627">
    <property type="entry name" value="PDZK1IP1/SMIM24"/>
</dbReference>
<dbReference type="PANTHER" id="PTHR15296">
    <property type="entry name" value="MEMBRANE-ASSOCIATED PROTEIN MAP17"/>
    <property type="match status" value="1"/>
</dbReference>
<dbReference type="PANTHER" id="PTHR15296:SF1">
    <property type="entry name" value="PDZK1 INTERACTING PROTEIN 1"/>
    <property type="match status" value="1"/>
</dbReference>
<dbReference type="Pfam" id="PF15807">
    <property type="entry name" value="MAP17"/>
    <property type="match status" value="1"/>
</dbReference>
<name>PTEG_XENLA</name>
<keyword id="KW-0217">Developmental protein</keyword>
<keyword id="KW-0472">Membrane</keyword>
<keyword id="KW-1185">Reference proteome</keyword>
<keyword id="KW-0812">Transmembrane</keyword>
<keyword id="KW-1133">Transmembrane helix</keyword>
<sequence>MFSLQHVLLILISLGQVYSQQVHHNAGRKFPQWLTGLIAMTVFLFLVLVVYVAKMFWDKRSQESINMKDIEEVVANGTSECCEARKENQYISCNMKDLRSSEHIHAYENPIEVNDNVRSTAM</sequence>
<proteinExistence type="evidence at transcript level"/>
<gene>
    <name type="primary">pteg</name>
</gene>